<accession>Q74CG7</accession>
<keyword id="KW-0067">ATP-binding</keyword>
<keyword id="KW-0963">Cytoplasm</keyword>
<keyword id="KW-0436">Ligase</keyword>
<keyword id="KW-0547">Nucleotide-binding</keyword>
<keyword id="KW-0566">Pantothenate biosynthesis</keyword>
<keyword id="KW-1185">Reference proteome</keyword>
<feature type="chain" id="PRO_0000128233" description="Pantothenate synthetase">
    <location>
        <begin position="1"/>
        <end position="283"/>
    </location>
</feature>
<feature type="active site" description="Proton donor" evidence="1">
    <location>
        <position position="37"/>
    </location>
</feature>
<feature type="binding site" evidence="1">
    <location>
        <begin position="30"/>
        <end position="37"/>
    </location>
    <ligand>
        <name>ATP</name>
        <dbReference type="ChEBI" id="CHEBI:30616"/>
    </ligand>
</feature>
<feature type="binding site" evidence="1">
    <location>
        <position position="61"/>
    </location>
    <ligand>
        <name>(R)-pantoate</name>
        <dbReference type="ChEBI" id="CHEBI:15980"/>
    </ligand>
</feature>
<feature type="binding site" evidence="1">
    <location>
        <position position="61"/>
    </location>
    <ligand>
        <name>beta-alanine</name>
        <dbReference type="ChEBI" id="CHEBI:57966"/>
    </ligand>
</feature>
<feature type="binding site" evidence="1">
    <location>
        <begin position="147"/>
        <end position="150"/>
    </location>
    <ligand>
        <name>ATP</name>
        <dbReference type="ChEBI" id="CHEBI:30616"/>
    </ligand>
</feature>
<feature type="binding site" evidence="1">
    <location>
        <position position="153"/>
    </location>
    <ligand>
        <name>(R)-pantoate</name>
        <dbReference type="ChEBI" id="CHEBI:15980"/>
    </ligand>
</feature>
<feature type="binding site" evidence="1">
    <location>
        <position position="176"/>
    </location>
    <ligand>
        <name>ATP</name>
        <dbReference type="ChEBI" id="CHEBI:30616"/>
    </ligand>
</feature>
<feature type="binding site" evidence="1">
    <location>
        <begin position="184"/>
        <end position="187"/>
    </location>
    <ligand>
        <name>ATP</name>
        <dbReference type="ChEBI" id="CHEBI:30616"/>
    </ligand>
</feature>
<evidence type="ECO:0000255" key="1">
    <source>
        <dbReference type="HAMAP-Rule" id="MF_00158"/>
    </source>
</evidence>
<protein>
    <recommendedName>
        <fullName evidence="1">Pantothenate synthetase</fullName>
        <shortName evidence="1">PS</shortName>
        <ecNumber evidence="1">6.3.2.1</ecNumber>
    </recommendedName>
    <alternativeName>
        <fullName evidence="1">Pantoate--beta-alanine ligase</fullName>
    </alternativeName>
    <alternativeName>
        <fullName evidence="1">Pantoate-activating enzyme</fullName>
    </alternativeName>
</protein>
<sequence length="283" mass="31164">MRIIDSVADMQAFSRDARRSGKTIALVPTMGYLHDGHASLMREGRTRADILVVSIFVNPTQFGPNEDFTTYPRDLERDLQVAEAAGADVIFAPRADDMYPAGFQTYVDVEKVTLPLCGASRPGHFRGVTTVVAKLFNIVMPHTAFFGKKDFQQLAVIRRMVADLNMDLSIVGMPIIREPDGLAMSSRNAYLGPQERTNALCLNRSLAAARTLFTDGERSVARLRDTVLRILTEVPGAAIDYADFRDSETLEPVEAANEKTLLALAVKIGTTRLIDNCVLGEEQ</sequence>
<proteinExistence type="inferred from homology"/>
<comment type="function">
    <text evidence="1">Catalyzes the condensation of pantoate with beta-alanine in an ATP-dependent reaction via a pantoyl-adenylate intermediate.</text>
</comment>
<comment type="catalytic activity">
    <reaction evidence="1">
        <text>(R)-pantoate + beta-alanine + ATP = (R)-pantothenate + AMP + diphosphate + H(+)</text>
        <dbReference type="Rhea" id="RHEA:10912"/>
        <dbReference type="ChEBI" id="CHEBI:15378"/>
        <dbReference type="ChEBI" id="CHEBI:15980"/>
        <dbReference type="ChEBI" id="CHEBI:29032"/>
        <dbReference type="ChEBI" id="CHEBI:30616"/>
        <dbReference type="ChEBI" id="CHEBI:33019"/>
        <dbReference type="ChEBI" id="CHEBI:57966"/>
        <dbReference type="ChEBI" id="CHEBI:456215"/>
        <dbReference type="EC" id="6.3.2.1"/>
    </reaction>
</comment>
<comment type="pathway">
    <text evidence="1">Cofactor biosynthesis; (R)-pantothenate biosynthesis; (R)-pantothenate from (R)-pantoate and beta-alanine: step 1/1.</text>
</comment>
<comment type="subunit">
    <text evidence="1">Homodimer.</text>
</comment>
<comment type="subcellular location">
    <subcellularLocation>
        <location evidence="1">Cytoplasm</location>
    </subcellularLocation>
</comment>
<comment type="miscellaneous">
    <text evidence="1">The reaction proceeds by a bi uni uni bi ping pong mechanism.</text>
</comment>
<comment type="similarity">
    <text evidence="1">Belongs to the pantothenate synthetase family.</text>
</comment>
<dbReference type="EC" id="6.3.2.1" evidence="1"/>
<dbReference type="EMBL" id="AE017180">
    <property type="protein sequence ID" value="AAR35084.1"/>
    <property type="molecule type" value="Genomic_DNA"/>
</dbReference>
<dbReference type="RefSeq" id="NP_952757.1">
    <property type="nucleotide sequence ID" value="NC_002939.5"/>
</dbReference>
<dbReference type="RefSeq" id="WP_010942350.1">
    <property type="nucleotide sequence ID" value="NC_002939.5"/>
</dbReference>
<dbReference type="SMR" id="Q74CG7"/>
<dbReference type="FunCoup" id="Q74CG7">
    <property type="interactions" value="542"/>
</dbReference>
<dbReference type="STRING" id="243231.GSU1706"/>
<dbReference type="EnsemblBacteria" id="AAR35084">
    <property type="protein sequence ID" value="AAR35084"/>
    <property type="gene ID" value="GSU1706"/>
</dbReference>
<dbReference type="KEGG" id="gsu:GSU1706"/>
<dbReference type="PATRIC" id="fig|243231.5.peg.1751"/>
<dbReference type="eggNOG" id="COG0414">
    <property type="taxonomic scope" value="Bacteria"/>
</dbReference>
<dbReference type="HOGENOM" id="CLU_047148_0_0_7"/>
<dbReference type="InParanoid" id="Q74CG7"/>
<dbReference type="OrthoDB" id="9773087at2"/>
<dbReference type="UniPathway" id="UPA00028">
    <property type="reaction ID" value="UER00005"/>
</dbReference>
<dbReference type="Proteomes" id="UP000000577">
    <property type="component" value="Chromosome"/>
</dbReference>
<dbReference type="GO" id="GO:0005829">
    <property type="term" value="C:cytosol"/>
    <property type="evidence" value="ECO:0000318"/>
    <property type="project" value="GO_Central"/>
</dbReference>
<dbReference type="GO" id="GO:0005524">
    <property type="term" value="F:ATP binding"/>
    <property type="evidence" value="ECO:0007669"/>
    <property type="project" value="UniProtKB-KW"/>
</dbReference>
<dbReference type="GO" id="GO:0004592">
    <property type="term" value="F:pantoate-beta-alanine ligase activity"/>
    <property type="evidence" value="ECO:0000318"/>
    <property type="project" value="GO_Central"/>
</dbReference>
<dbReference type="GO" id="GO:0015940">
    <property type="term" value="P:pantothenate biosynthetic process"/>
    <property type="evidence" value="ECO:0000318"/>
    <property type="project" value="GO_Central"/>
</dbReference>
<dbReference type="CDD" id="cd00560">
    <property type="entry name" value="PanC"/>
    <property type="match status" value="1"/>
</dbReference>
<dbReference type="FunFam" id="3.30.1300.10:FF:000001">
    <property type="entry name" value="Pantothenate synthetase"/>
    <property type="match status" value="1"/>
</dbReference>
<dbReference type="FunFam" id="3.40.50.620:FF:000013">
    <property type="entry name" value="Pantothenate synthetase"/>
    <property type="match status" value="1"/>
</dbReference>
<dbReference type="Gene3D" id="3.40.50.620">
    <property type="entry name" value="HUPs"/>
    <property type="match status" value="1"/>
</dbReference>
<dbReference type="Gene3D" id="3.30.1300.10">
    <property type="entry name" value="Pantoate-beta-alanine ligase, C-terminal domain"/>
    <property type="match status" value="1"/>
</dbReference>
<dbReference type="HAMAP" id="MF_00158">
    <property type="entry name" value="PanC"/>
    <property type="match status" value="1"/>
</dbReference>
<dbReference type="InterPro" id="IPR003721">
    <property type="entry name" value="Pantoate_ligase"/>
</dbReference>
<dbReference type="InterPro" id="IPR042176">
    <property type="entry name" value="Pantoate_ligase_C"/>
</dbReference>
<dbReference type="InterPro" id="IPR014729">
    <property type="entry name" value="Rossmann-like_a/b/a_fold"/>
</dbReference>
<dbReference type="NCBIfam" id="TIGR00018">
    <property type="entry name" value="panC"/>
    <property type="match status" value="1"/>
</dbReference>
<dbReference type="PANTHER" id="PTHR21299">
    <property type="entry name" value="CYTIDYLATE KINASE/PANTOATE-BETA-ALANINE LIGASE"/>
    <property type="match status" value="1"/>
</dbReference>
<dbReference type="PANTHER" id="PTHR21299:SF1">
    <property type="entry name" value="PANTOATE--BETA-ALANINE LIGASE"/>
    <property type="match status" value="1"/>
</dbReference>
<dbReference type="Pfam" id="PF02569">
    <property type="entry name" value="Pantoate_ligase"/>
    <property type="match status" value="1"/>
</dbReference>
<dbReference type="SUPFAM" id="SSF52374">
    <property type="entry name" value="Nucleotidylyl transferase"/>
    <property type="match status" value="1"/>
</dbReference>
<name>PANC_GEOSL</name>
<organism>
    <name type="scientific">Geobacter sulfurreducens (strain ATCC 51573 / DSM 12127 / PCA)</name>
    <dbReference type="NCBI Taxonomy" id="243231"/>
    <lineage>
        <taxon>Bacteria</taxon>
        <taxon>Pseudomonadati</taxon>
        <taxon>Thermodesulfobacteriota</taxon>
        <taxon>Desulfuromonadia</taxon>
        <taxon>Geobacterales</taxon>
        <taxon>Geobacteraceae</taxon>
        <taxon>Geobacter</taxon>
    </lineage>
</organism>
<gene>
    <name evidence="1" type="primary">panC</name>
    <name type="ordered locus">GSU1706</name>
</gene>
<reference key="1">
    <citation type="journal article" date="2003" name="Science">
        <title>Genome of Geobacter sulfurreducens: metal reduction in subsurface environments.</title>
        <authorList>
            <person name="Methe B.A."/>
            <person name="Nelson K.E."/>
            <person name="Eisen J.A."/>
            <person name="Paulsen I.T."/>
            <person name="Nelson W.C."/>
            <person name="Heidelberg J.F."/>
            <person name="Wu D."/>
            <person name="Wu M."/>
            <person name="Ward N.L."/>
            <person name="Beanan M.J."/>
            <person name="Dodson R.J."/>
            <person name="Madupu R."/>
            <person name="Brinkac L.M."/>
            <person name="Daugherty S.C."/>
            <person name="DeBoy R.T."/>
            <person name="Durkin A.S."/>
            <person name="Gwinn M.L."/>
            <person name="Kolonay J.F."/>
            <person name="Sullivan S.A."/>
            <person name="Haft D.H."/>
            <person name="Selengut J."/>
            <person name="Davidsen T.M."/>
            <person name="Zafar N."/>
            <person name="White O."/>
            <person name="Tran B."/>
            <person name="Romero C."/>
            <person name="Forberger H.A."/>
            <person name="Weidman J.F."/>
            <person name="Khouri H.M."/>
            <person name="Feldblyum T.V."/>
            <person name="Utterback T.R."/>
            <person name="Van Aken S.E."/>
            <person name="Lovley D.R."/>
            <person name="Fraser C.M."/>
        </authorList>
    </citation>
    <scope>NUCLEOTIDE SEQUENCE [LARGE SCALE GENOMIC DNA]</scope>
    <source>
        <strain>ATCC 51573 / DSM 12127 / PCA</strain>
    </source>
</reference>